<organism>
    <name type="scientific">Human immunodeficiency virus type 2 subtype A (isolate NIH-Z)</name>
    <name type="common">HIV-2</name>
    <dbReference type="NCBI Taxonomy" id="11719"/>
    <lineage>
        <taxon>Viruses</taxon>
        <taxon>Riboviria</taxon>
        <taxon>Pararnavirae</taxon>
        <taxon>Artverviricota</taxon>
        <taxon>Revtraviricetes</taxon>
        <taxon>Ortervirales</taxon>
        <taxon>Retroviridae</taxon>
        <taxon>Orthoretrovirinae</taxon>
        <taxon>Lentivirus</taxon>
        <taxon>Human immunodeficiency virus 2</taxon>
    </lineage>
</organism>
<name>VPX_HV2NZ</name>
<feature type="chain" id="PRO_0000085396" description="Protein Vpx">
    <location>
        <begin position="1"/>
        <end position="112"/>
    </location>
</feature>
<feature type="region of interest" description="Binds to human NUP153" evidence="4">
    <location>
        <begin position="61"/>
        <end position="80"/>
    </location>
</feature>
<feature type="region of interest" description="Disordered" evidence="5">
    <location>
        <begin position="90"/>
        <end position="112"/>
    </location>
</feature>
<feature type="short sequence motif" description="Nuclear localization signal" evidence="1">
    <location>
        <begin position="65"/>
        <end position="72"/>
    </location>
</feature>
<feature type="compositionally biased region" description="Gly residues" evidence="5">
    <location>
        <begin position="90"/>
        <end position="101"/>
    </location>
</feature>
<feature type="compositionally biased region" description="Pro residues" evidence="5">
    <location>
        <begin position="102"/>
        <end position="112"/>
    </location>
</feature>
<accession>P05915</accession>
<sequence length="112" mass="12760">MTDPRETVPPGNSGEETIEEAFAWLDRTVEAINREAVNHHPRELIFQVWQRSWRYWHDEQGMSTSYTKYRYLCLIQMAMYMHAKRDGTCLGGGMGQKGGDQGPPPPPPPGLV</sequence>
<proteinExistence type="inferred from homology"/>
<reference key="1">
    <citation type="journal article" date="1988" name="Proc. Natl. Acad. Sci. U.S.A.">
        <title>Genetic variability between isolates of human immunodeficiency virus (HIV) type 2 is comparable to the variability among HIV type 1.</title>
        <authorList>
            <person name="Zagury J.F."/>
            <person name="Franchini G."/>
            <person name="Reitz M.S. Jr."/>
            <person name="Collalti E."/>
            <person name="Starcich B.R."/>
            <person name="Hall L."/>
            <person name="Fargnoli K.A."/>
            <person name="Jagodzinski L.L."/>
            <person name="Guo H.-G."/>
            <person name="Laure F."/>
            <person name="Arya S.K."/>
            <person name="Josephs S.F."/>
            <person name="Zagury D."/>
            <person name="Wong-Staal F."/>
            <person name="Gallo R.C."/>
        </authorList>
    </citation>
    <scope>NUCLEOTIDE SEQUENCE [GENOMIC DNA]</scope>
</reference>
<protein>
    <recommendedName>
        <fullName>Protein Vpx</fullName>
    </recommendedName>
    <alternativeName>
        <fullName>Viral protein X</fullName>
    </alternativeName>
    <alternativeName>
        <fullName>X ORF protein</fullName>
    </alternativeName>
</protein>
<keyword id="KW-0014">AIDS</keyword>
<keyword id="KW-1048">Host nucleus</keyword>
<keyword id="KW-0945">Host-virus interaction</keyword>
<keyword id="KW-1090">Inhibition of host innate immune response by virus</keyword>
<keyword id="KW-0899">Viral immunoevasion</keyword>
<keyword id="KW-0946">Virion</keyword>
<gene>
    <name type="primary">vpx</name>
</gene>
<organismHost>
    <name type="scientific">Homo sapiens</name>
    <name type="common">Human</name>
    <dbReference type="NCBI Taxonomy" id="9606"/>
</organismHost>
<comment type="function">
    <text evidence="1">Plays a role in nuclear translocation of the viral pre-integration complex (PIC), thus is required for the virus to infect non-dividing cells. Targets specific host proteins for degradation by the 26S proteasome. Acts by associating with the cellular CUL4A-DDB1 E3 ligase complex through direct interaction with host VPRPB/DCAF-1. This change in the E3 ligase substrate specificity results in the degradation of host SAMHD1. In turn, SAMHD1 depletion allows viral replication in host myeloid cells by preventing SAMHD1-mediated hydrolysis of intracellular dNTPs necessary for reverse transcription (By similarity).</text>
</comment>
<comment type="subunit">
    <text evidence="1 2 3">Interacts with the P6 region of unprocessed GAG (By similarity). Interacts with host VPRBP/DCAF1, leading to change substrate specificity of the CUL4A-DDB1 E3 ligase complex (By similarity). Interacts with host NUP153 (By similarity).</text>
</comment>
<comment type="subcellular location">
    <subcellularLocation>
        <location>Virion</location>
    </subcellularLocation>
    <subcellularLocation>
        <location>Host nucleus</location>
    </subcellularLocation>
    <text evidence="1">Nuclear just after virion uncoating, or if expressed in the absence of unprocessed GAG.</text>
</comment>
<comment type="similarity">
    <text evidence="6">Belongs to the lentivirus VPX protein family.</text>
</comment>
<dbReference type="EMBL" id="J03654">
    <property type="protein sequence ID" value="AAB00757.1"/>
    <property type="molecule type" value="Genomic_DNA"/>
</dbReference>
<dbReference type="SMR" id="P05915"/>
<dbReference type="Proteomes" id="UP000246679">
    <property type="component" value="Segment"/>
</dbReference>
<dbReference type="GO" id="GO:0042025">
    <property type="term" value="C:host cell nucleus"/>
    <property type="evidence" value="ECO:0007669"/>
    <property type="project" value="UniProtKB-SubCell"/>
</dbReference>
<dbReference type="GO" id="GO:0044423">
    <property type="term" value="C:virion component"/>
    <property type="evidence" value="ECO:0007669"/>
    <property type="project" value="UniProtKB-KW"/>
</dbReference>
<dbReference type="GO" id="GO:0052170">
    <property type="term" value="P:symbiont-mediated suppression of host innate immune response"/>
    <property type="evidence" value="ECO:0007669"/>
    <property type="project" value="UniProtKB-KW"/>
</dbReference>
<dbReference type="GO" id="GO:0019058">
    <property type="term" value="P:viral life cycle"/>
    <property type="evidence" value="ECO:0007669"/>
    <property type="project" value="InterPro"/>
</dbReference>
<dbReference type="Gene3D" id="1.20.5.4730">
    <property type="match status" value="1"/>
</dbReference>
<dbReference type="InterPro" id="IPR053711">
    <property type="entry name" value="Lentiviral_Vpx_assoc_factor"/>
</dbReference>
<dbReference type="InterPro" id="IPR000012">
    <property type="entry name" value="RetroV_VpR/X"/>
</dbReference>
<dbReference type="Pfam" id="PF00522">
    <property type="entry name" value="VPR"/>
    <property type="match status" value="1"/>
</dbReference>
<evidence type="ECO:0000250" key="1"/>
<evidence type="ECO:0000250" key="2">
    <source>
        <dbReference type="UniProtKB" id="P12454"/>
    </source>
</evidence>
<evidence type="ECO:0000250" key="3">
    <source>
        <dbReference type="UniProtKB" id="P18099"/>
    </source>
</evidence>
<evidence type="ECO:0000250" key="4">
    <source>
        <dbReference type="UniProtKB" id="P19508"/>
    </source>
</evidence>
<evidence type="ECO:0000256" key="5">
    <source>
        <dbReference type="SAM" id="MobiDB-lite"/>
    </source>
</evidence>
<evidence type="ECO:0000305" key="6"/>